<organism>
    <name type="scientific">Ruegeria sp. (strain TM1040)</name>
    <name type="common">Silicibacter sp.</name>
    <dbReference type="NCBI Taxonomy" id="292414"/>
    <lineage>
        <taxon>Bacteria</taxon>
        <taxon>Pseudomonadati</taxon>
        <taxon>Pseudomonadota</taxon>
        <taxon>Alphaproteobacteria</taxon>
        <taxon>Rhodobacterales</taxon>
        <taxon>Roseobacteraceae</taxon>
        <taxon>Ruegeria</taxon>
    </lineage>
</organism>
<reference key="1">
    <citation type="submission" date="2006-05" db="EMBL/GenBank/DDBJ databases">
        <title>Complete sequence of megaplasmid of Silicibacter sp. TM1040.</title>
        <authorList>
            <consortium name="US DOE Joint Genome Institute"/>
            <person name="Copeland A."/>
            <person name="Lucas S."/>
            <person name="Lapidus A."/>
            <person name="Barry K."/>
            <person name="Detter J.C."/>
            <person name="Glavina del Rio T."/>
            <person name="Hammon N."/>
            <person name="Israni S."/>
            <person name="Dalin E."/>
            <person name="Tice H."/>
            <person name="Pitluck S."/>
            <person name="Brettin T."/>
            <person name="Bruce D."/>
            <person name="Han C."/>
            <person name="Tapia R."/>
            <person name="Goodwin L."/>
            <person name="Thompson L.S."/>
            <person name="Gilna P."/>
            <person name="Schmutz J."/>
            <person name="Larimer F."/>
            <person name="Land M."/>
            <person name="Hauser L."/>
            <person name="Kyrpides N."/>
            <person name="Kim E."/>
            <person name="Belas R."/>
            <person name="Moran M.A."/>
            <person name="Buchan A."/>
            <person name="Gonzalez J.M."/>
            <person name="Schell M.A."/>
            <person name="Sun F."/>
            <person name="Richardson P."/>
        </authorList>
    </citation>
    <scope>NUCLEOTIDE SEQUENCE [LARGE SCALE GENOMIC DNA]</scope>
    <source>
        <strain>TM1040</strain>
    </source>
</reference>
<sequence>MTPPILRRLDDLRALRRDWMKKGDTLGLVPTMGALHAGHLSLVEAAKAACDHVVVTIFVNPKQFNSPEDLANYPRTEHEDAQKLAPYGVDAIYVPDPDQIYPEGYATTVSLTGVTDVMEGPNRPGHFEGVATVVAKLFLQSGADRAFFGEKDYQQLMVVRRMARDLDIPIEVIGCPTVREASGLAMSSRNMRLSAAATKTAGQLNPLMEAAATRLRAGEDYAPLEAEMRAQLSDLGFAEIEYIDLRCAQDLTSLDRLDRPARMFVAAWLDGVRLIDNIAV</sequence>
<comment type="function">
    <text evidence="1">Catalyzes the condensation of pantoate with beta-alanine in an ATP-dependent reaction via a pantoyl-adenylate intermediate.</text>
</comment>
<comment type="catalytic activity">
    <reaction evidence="1">
        <text>(R)-pantoate + beta-alanine + ATP = (R)-pantothenate + AMP + diphosphate + H(+)</text>
        <dbReference type="Rhea" id="RHEA:10912"/>
        <dbReference type="ChEBI" id="CHEBI:15378"/>
        <dbReference type="ChEBI" id="CHEBI:15980"/>
        <dbReference type="ChEBI" id="CHEBI:29032"/>
        <dbReference type="ChEBI" id="CHEBI:30616"/>
        <dbReference type="ChEBI" id="CHEBI:33019"/>
        <dbReference type="ChEBI" id="CHEBI:57966"/>
        <dbReference type="ChEBI" id="CHEBI:456215"/>
        <dbReference type="EC" id="6.3.2.1"/>
    </reaction>
</comment>
<comment type="pathway">
    <text evidence="1">Cofactor biosynthesis; (R)-pantothenate biosynthesis; (R)-pantothenate from (R)-pantoate and beta-alanine: step 1/1.</text>
</comment>
<comment type="subunit">
    <text evidence="1">Homodimer.</text>
</comment>
<comment type="subcellular location">
    <subcellularLocation>
        <location evidence="1">Cytoplasm</location>
    </subcellularLocation>
</comment>
<comment type="miscellaneous">
    <text evidence="1">The reaction proceeds by a bi uni uni bi ping pong mechanism.</text>
</comment>
<comment type="similarity">
    <text evidence="1">Belongs to the pantothenate synthetase family.</text>
</comment>
<dbReference type="EC" id="6.3.2.1" evidence="1"/>
<dbReference type="EMBL" id="CP000376">
    <property type="protein sequence ID" value="ABF62411.1"/>
    <property type="molecule type" value="Genomic_DNA"/>
</dbReference>
<dbReference type="RefSeq" id="WP_011537054.1">
    <property type="nucleotide sequence ID" value="NC_008043.1"/>
</dbReference>
<dbReference type="SMR" id="Q1GLQ5"/>
<dbReference type="KEGG" id="sit:TM1040_3439"/>
<dbReference type="HOGENOM" id="CLU_047148_0_0_5"/>
<dbReference type="OrthoDB" id="9773087at2"/>
<dbReference type="UniPathway" id="UPA00028">
    <property type="reaction ID" value="UER00005"/>
</dbReference>
<dbReference type="Proteomes" id="UP000000636">
    <property type="component" value="Plasmid megaplasmid TM1040"/>
</dbReference>
<dbReference type="GO" id="GO:0005829">
    <property type="term" value="C:cytosol"/>
    <property type="evidence" value="ECO:0007669"/>
    <property type="project" value="TreeGrafter"/>
</dbReference>
<dbReference type="GO" id="GO:0005524">
    <property type="term" value="F:ATP binding"/>
    <property type="evidence" value="ECO:0007669"/>
    <property type="project" value="UniProtKB-KW"/>
</dbReference>
<dbReference type="GO" id="GO:0004592">
    <property type="term" value="F:pantoate-beta-alanine ligase activity"/>
    <property type="evidence" value="ECO:0007669"/>
    <property type="project" value="UniProtKB-UniRule"/>
</dbReference>
<dbReference type="GO" id="GO:0015940">
    <property type="term" value="P:pantothenate biosynthetic process"/>
    <property type="evidence" value="ECO:0007669"/>
    <property type="project" value="UniProtKB-UniRule"/>
</dbReference>
<dbReference type="CDD" id="cd00560">
    <property type="entry name" value="PanC"/>
    <property type="match status" value="1"/>
</dbReference>
<dbReference type="FunFam" id="3.40.50.620:FF:000114">
    <property type="entry name" value="Pantothenate synthetase"/>
    <property type="match status" value="1"/>
</dbReference>
<dbReference type="Gene3D" id="3.40.50.620">
    <property type="entry name" value="HUPs"/>
    <property type="match status" value="1"/>
</dbReference>
<dbReference type="Gene3D" id="3.30.1300.10">
    <property type="entry name" value="Pantoate-beta-alanine ligase, C-terminal domain"/>
    <property type="match status" value="1"/>
</dbReference>
<dbReference type="HAMAP" id="MF_00158">
    <property type="entry name" value="PanC"/>
    <property type="match status" value="1"/>
</dbReference>
<dbReference type="InterPro" id="IPR004821">
    <property type="entry name" value="Cyt_trans-like"/>
</dbReference>
<dbReference type="InterPro" id="IPR003721">
    <property type="entry name" value="Pantoate_ligase"/>
</dbReference>
<dbReference type="InterPro" id="IPR042176">
    <property type="entry name" value="Pantoate_ligase_C"/>
</dbReference>
<dbReference type="InterPro" id="IPR014729">
    <property type="entry name" value="Rossmann-like_a/b/a_fold"/>
</dbReference>
<dbReference type="NCBIfam" id="TIGR00125">
    <property type="entry name" value="cyt_tran_rel"/>
    <property type="match status" value="1"/>
</dbReference>
<dbReference type="NCBIfam" id="TIGR00018">
    <property type="entry name" value="panC"/>
    <property type="match status" value="1"/>
</dbReference>
<dbReference type="PANTHER" id="PTHR21299">
    <property type="entry name" value="CYTIDYLATE KINASE/PANTOATE-BETA-ALANINE LIGASE"/>
    <property type="match status" value="1"/>
</dbReference>
<dbReference type="PANTHER" id="PTHR21299:SF1">
    <property type="entry name" value="PANTOATE--BETA-ALANINE LIGASE"/>
    <property type="match status" value="1"/>
</dbReference>
<dbReference type="Pfam" id="PF02569">
    <property type="entry name" value="Pantoate_ligase"/>
    <property type="match status" value="1"/>
</dbReference>
<dbReference type="SUPFAM" id="SSF52374">
    <property type="entry name" value="Nucleotidylyl transferase"/>
    <property type="match status" value="1"/>
</dbReference>
<evidence type="ECO:0000255" key="1">
    <source>
        <dbReference type="HAMAP-Rule" id="MF_00158"/>
    </source>
</evidence>
<proteinExistence type="inferred from homology"/>
<gene>
    <name evidence="1" type="primary">panC</name>
    <name type="ordered locus">TM1040_3439</name>
</gene>
<geneLocation type="plasmid">
    <name>megaplasmid TM1040</name>
</geneLocation>
<feature type="chain" id="PRO_0000305556" description="Pantothenate synthetase">
    <location>
        <begin position="1"/>
        <end position="280"/>
    </location>
</feature>
<feature type="active site" description="Proton donor" evidence="1">
    <location>
        <position position="39"/>
    </location>
</feature>
<feature type="binding site" evidence="1">
    <location>
        <begin position="32"/>
        <end position="39"/>
    </location>
    <ligand>
        <name>ATP</name>
        <dbReference type="ChEBI" id="CHEBI:30616"/>
    </ligand>
</feature>
<feature type="binding site" evidence="1">
    <location>
        <position position="63"/>
    </location>
    <ligand>
        <name>(R)-pantoate</name>
        <dbReference type="ChEBI" id="CHEBI:15980"/>
    </ligand>
</feature>
<feature type="binding site" evidence="1">
    <location>
        <position position="63"/>
    </location>
    <ligand>
        <name>beta-alanine</name>
        <dbReference type="ChEBI" id="CHEBI:57966"/>
    </ligand>
</feature>
<feature type="binding site" evidence="1">
    <location>
        <begin position="149"/>
        <end position="152"/>
    </location>
    <ligand>
        <name>ATP</name>
        <dbReference type="ChEBI" id="CHEBI:30616"/>
    </ligand>
</feature>
<feature type="binding site" evidence="1">
    <location>
        <position position="155"/>
    </location>
    <ligand>
        <name>(R)-pantoate</name>
        <dbReference type="ChEBI" id="CHEBI:15980"/>
    </ligand>
</feature>
<feature type="binding site" evidence="1">
    <location>
        <position position="178"/>
    </location>
    <ligand>
        <name>ATP</name>
        <dbReference type="ChEBI" id="CHEBI:30616"/>
    </ligand>
</feature>
<feature type="binding site" evidence="1">
    <location>
        <begin position="186"/>
        <end position="189"/>
    </location>
    <ligand>
        <name>ATP</name>
        <dbReference type="ChEBI" id="CHEBI:30616"/>
    </ligand>
</feature>
<name>PANC_RUEST</name>
<accession>Q1GLQ5</accession>
<keyword id="KW-0067">ATP-binding</keyword>
<keyword id="KW-0963">Cytoplasm</keyword>
<keyword id="KW-0436">Ligase</keyword>
<keyword id="KW-0547">Nucleotide-binding</keyword>
<keyword id="KW-0566">Pantothenate biosynthesis</keyword>
<keyword id="KW-0614">Plasmid</keyword>
<keyword id="KW-1185">Reference proteome</keyword>
<protein>
    <recommendedName>
        <fullName evidence="1">Pantothenate synthetase</fullName>
        <shortName evidence="1">PS</shortName>
        <ecNumber evidence="1">6.3.2.1</ecNumber>
    </recommendedName>
    <alternativeName>
        <fullName evidence="1">Pantoate--beta-alanine ligase</fullName>
    </alternativeName>
    <alternativeName>
        <fullName evidence="1">Pantoate-activating enzyme</fullName>
    </alternativeName>
</protein>